<evidence type="ECO:0000255" key="1">
    <source>
        <dbReference type="HAMAP-Rule" id="MF_00361"/>
    </source>
</evidence>
<protein>
    <recommendedName>
        <fullName evidence="1">NAD kinase</fullName>
        <ecNumber evidence="1">2.7.1.23</ecNumber>
    </recommendedName>
    <alternativeName>
        <fullName evidence="1">ATP-dependent NAD kinase</fullName>
    </alternativeName>
</protein>
<proteinExistence type="evidence at protein level"/>
<accession>P65779</accession>
<accession>Q97QV0</accession>
<feature type="chain" id="PRO_0000120670" description="NAD kinase">
    <location>
        <begin position="1"/>
        <end position="272"/>
    </location>
</feature>
<feature type="active site" description="Proton acceptor" evidence="1">
    <location>
        <position position="50"/>
    </location>
</feature>
<feature type="binding site" evidence="1">
    <location>
        <begin position="50"/>
        <end position="51"/>
    </location>
    <ligand>
        <name>NAD(+)</name>
        <dbReference type="ChEBI" id="CHEBI:57540"/>
    </ligand>
</feature>
<feature type="binding site" evidence="1">
    <location>
        <begin position="126"/>
        <end position="127"/>
    </location>
    <ligand>
        <name>NAD(+)</name>
        <dbReference type="ChEBI" id="CHEBI:57540"/>
    </ligand>
</feature>
<feature type="binding site" evidence="1">
    <location>
        <position position="152"/>
    </location>
    <ligand>
        <name>NAD(+)</name>
        <dbReference type="ChEBI" id="CHEBI:57540"/>
    </ligand>
</feature>
<feature type="binding site" evidence="1">
    <location>
        <position position="154"/>
    </location>
    <ligand>
        <name>NAD(+)</name>
        <dbReference type="ChEBI" id="CHEBI:57540"/>
    </ligand>
</feature>
<feature type="binding site" evidence="1">
    <location>
        <begin position="165"/>
        <end position="170"/>
    </location>
    <ligand>
        <name>NAD(+)</name>
        <dbReference type="ChEBI" id="CHEBI:57540"/>
    </ligand>
</feature>
<feature type="binding site" evidence="1">
    <location>
        <position position="189"/>
    </location>
    <ligand>
        <name>NAD(+)</name>
        <dbReference type="ChEBI" id="CHEBI:57540"/>
    </ligand>
</feature>
<reference key="1">
    <citation type="journal article" date="2001" name="Science">
        <title>Complete genome sequence of a virulent isolate of Streptococcus pneumoniae.</title>
        <authorList>
            <person name="Tettelin H."/>
            <person name="Nelson K.E."/>
            <person name="Paulsen I.T."/>
            <person name="Eisen J.A."/>
            <person name="Read T.D."/>
            <person name="Peterson S.N."/>
            <person name="Heidelberg J.F."/>
            <person name="DeBoy R.T."/>
            <person name="Haft D.H."/>
            <person name="Dodson R.J."/>
            <person name="Durkin A.S."/>
            <person name="Gwinn M.L."/>
            <person name="Kolonay J.F."/>
            <person name="Nelson W.C."/>
            <person name="Peterson J.D."/>
            <person name="Umayam L.A."/>
            <person name="White O."/>
            <person name="Salzberg S.L."/>
            <person name="Lewis M.R."/>
            <person name="Radune D."/>
            <person name="Holtzapple E.K."/>
            <person name="Khouri H.M."/>
            <person name="Wolf A.M."/>
            <person name="Utterback T.R."/>
            <person name="Hansen C.L."/>
            <person name="McDonald L.A."/>
            <person name="Feldblyum T.V."/>
            <person name="Angiuoli S.V."/>
            <person name="Dickinson T."/>
            <person name="Hickey E.K."/>
            <person name="Holt I.E."/>
            <person name="Loftus B.J."/>
            <person name="Yang F."/>
            <person name="Smith H.O."/>
            <person name="Venter J.C."/>
            <person name="Dougherty B.A."/>
            <person name="Morrison D.A."/>
            <person name="Hollingshead S.K."/>
            <person name="Fraser C.M."/>
        </authorList>
    </citation>
    <scope>NUCLEOTIDE SEQUENCE [LARGE SCALE GENOMIC DNA]</scope>
    <source>
        <strain>ATCC BAA-334 / TIGR4</strain>
    </source>
</reference>
<name>NADK_STRPN</name>
<dbReference type="EC" id="2.7.1.23" evidence="1"/>
<dbReference type="EMBL" id="AE005672">
    <property type="protein sequence ID" value="AAK75210.1"/>
    <property type="molecule type" value="Genomic_DNA"/>
</dbReference>
<dbReference type="PIR" id="A95127">
    <property type="entry name" value="A95127"/>
</dbReference>
<dbReference type="RefSeq" id="WP_000799053.1">
    <property type="nucleotide sequence ID" value="NZ_CP155539.1"/>
</dbReference>
<dbReference type="SMR" id="P65779"/>
<dbReference type="IntAct" id="P65779">
    <property type="interactions" value="1"/>
</dbReference>
<dbReference type="PaxDb" id="170187-SP_1098"/>
<dbReference type="EnsemblBacteria" id="AAK75210">
    <property type="protein sequence ID" value="AAK75210"/>
    <property type="gene ID" value="SP_1098"/>
</dbReference>
<dbReference type="KEGG" id="spn:SP_1098"/>
<dbReference type="eggNOG" id="COG0061">
    <property type="taxonomic scope" value="Bacteria"/>
</dbReference>
<dbReference type="PhylomeDB" id="P65779"/>
<dbReference type="BioCyc" id="SPNE170187:G1FZB-1126-MONOMER"/>
<dbReference type="Proteomes" id="UP000000585">
    <property type="component" value="Chromosome"/>
</dbReference>
<dbReference type="GO" id="GO:0005737">
    <property type="term" value="C:cytoplasm"/>
    <property type="evidence" value="ECO:0007669"/>
    <property type="project" value="UniProtKB-SubCell"/>
</dbReference>
<dbReference type="GO" id="GO:0005524">
    <property type="term" value="F:ATP binding"/>
    <property type="evidence" value="ECO:0007669"/>
    <property type="project" value="UniProtKB-KW"/>
</dbReference>
<dbReference type="GO" id="GO:0046872">
    <property type="term" value="F:metal ion binding"/>
    <property type="evidence" value="ECO:0007669"/>
    <property type="project" value="UniProtKB-UniRule"/>
</dbReference>
<dbReference type="GO" id="GO:0051287">
    <property type="term" value="F:NAD binding"/>
    <property type="evidence" value="ECO:0007669"/>
    <property type="project" value="UniProtKB-ARBA"/>
</dbReference>
<dbReference type="GO" id="GO:0003951">
    <property type="term" value="F:NAD+ kinase activity"/>
    <property type="evidence" value="ECO:0007669"/>
    <property type="project" value="UniProtKB-UniRule"/>
</dbReference>
<dbReference type="GO" id="GO:0019674">
    <property type="term" value="P:NAD metabolic process"/>
    <property type="evidence" value="ECO:0007669"/>
    <property type="project" value="InterPro"/>
</dbReference>
<dbReference type="GO" id="GO:0006741">
    <property type="term" value="P:NADP biosynthetic process"/>
    <property type="evidence" value="ECO:0007669"/>
    <property type="project" value="UniProtKB-UniRule"/>
</dbReference>
<dbReference type="FunFam" id="2.60.200.30:FF:000002">
    <property type="entry name" value="NAD kinase"/>
    <property type="match status" value="1"/>
</dbReference>
<dbReference type="Gene3D" id="3.40.50.10330">
    <property type="entry name" value="Probable inorganic polyphosphate/atp-NAD kinase, domain 1"/>
    <property type="match status" value="1"/>
</dbReference>
<dbReference type="Gene3D" id="2.60.200.30">
    <property type="entry name" value="Probable inorganic polyphosphate/atp-NAD kinase, domain 2"/>
    <property type="match status" value="1"/>
</dbReference>
<dbReference type="HAMAP" id="MF_00361">
    <property type="entry name" value="NAD_kinase"/>
    <property type="match status" value="1"/>
</dbReference>
<dbReference type="InterPro" id="IPR017438">
    <property type="entry name" value="ATP-NAD_kinase_N"/>
</dbReference>
<dbReference type="InterPro" id="IPR017437">
    <property type="entry name" value="ATP-NAD_kinase_PpnK-typ_C"/>
</dbReference>
<dbReference type="InterPro" id="IPR016064">
    <property type="entry name" value="NAD/diacylglycerol_kinase_sf"/>
</dbReference>
<dbReference type="InterPro" id="IPR002504">
    <property type="entry name" value="NADK"/>
</dbReference>
<dbReference type="NCBIfam" id="NF003424">
    <property type="entry name" value="PRK04885.1"/>
    <property type="match status" value="1"/>
</dbReference>
<dbReference type="PANTHER" id="PTHR20275">
    <property type="entry name" value="NAD KINASE"/>
    <property type="match status" value="1"/>
</dbReference>
<dbReference type="PANTHER" id="PTHR20275:SF0">
    <property type="entry name" value="NAD KINASE"/>
    <property type="match status" value="1"/>
</dbReference>
<dbReference type="Pfam" id="PF20143">
    <property type="entry name" value="NAD_kinase_C"/>
    <property type="match status" value="1"/>
</dbReference>
<dbReference type="SUPFAM" id="SSF111331">
    <property type="entry name" value="NAD kinase/diacylglycerol kinase-like"/>
    <property type="match status" value="1"/>
</dbReference>
<sequence>MKNTGKRIDLIANRKPQSQRVLYELRDRLKRNQFILNDTNPDIVISIGGDGMLLSAFHKYENQLDKVRFIGLHTGHLGFYTDYRDFELDKLVTNLQLDTGARVSYPVLNVKVFLENGEVKIFRALNEASIRRSDRTMVADIVINGVPFERFRGDGLTVSTPTGSTAYNKSLGGAVLHPTIEALQLTEIASLNNRVYRTLGSSIIVPKKDKIELIPTRNDYHTISVDNSVYSFRNIERIEYQIDHHKIHFVATPSHTSFWNRVKDAFIGEVDE</sequence>
<organism>
    <name type="scientific">Streptococcus pneumoniae serotype 4 (strain ATCC BAA-334 / TIGR4)</name>
    <dbReference type="NCBI Taxonomy" id="170187"/>
    <lineage>
        <taxon>Bacteria</taxon>
        <taxon>Bacillati</taxon>
        <taxon>Bacillota</taxon>
        <taxon>Bacilli</taxon>
        <taxon>Lactobacillales</taxon>
        <taxon>Streptococcaceae</taxon>
        <taxon>Streptococcus</taxon>
    </lineage>
</organism>
<gene>
    <name evidence="1" type="primary">nadK</name>
    <name type="ordered locus">SP_1098</name>
</gene>
<comment type="function">
    <text evidence="1">Involved in the regulation of the intracellular balance of NAD and NADP, and is a key enzyme in the biosynthesis of NADP. Catalyzes specifically the phosphorylation on 2'-hydroxyl of the adenosine moiety of NAD to yield NADP.</text>
</comment>
<comment type="catalytic activity">
    <reaction evidence="1">
        <text>NAD(+) + ATP = ADP + NADP(+) + H(+)</text>
        <dbReference type="Rhea" id="RHEA:18629"/>
        <dbReference type="ChEBI" id="CHEBI:15378"/>
        <dbReference type="ChEBI" id="CHEBI:30616"/>
        <dbReference type="ChEBI" id="CHEBI:57540"/>
        <dbReference type="ChEBI" id="CHEBI:58349"/>
        <dbReference type="ChEBI" id="CHEBI:456216"/>
        <dbReference type="EC" id="2.7.1.23"/>
    </reaction>
</comment>
<comment type="cofactor">
    <cofactor evidence="1">
        <name>a divalent metal cation</name>
        <dbReference type="ChEBI" id="CHEBI:60240"/>
    </cofactor>
</comment>
<comment type="interaction">
    <interactant intactId="EBI-6472853">
        <id>P65779</id>
    </interactant>
    <interactant intactId="EBI-6472858">
        <id>Q97PW7</id>
        <label>SP_1473</label>
    </interactant>
    <organismsDiffer>false</organismsDiffer>
    <experiments>3</experiments>
</comment>
<comment type="subcellular location">
    <subcellularLocation>
        <location evidence="1">Cytoplasm</location>
    </subcellularLocation>
</comment>
<comment type="similarity">
    <text evidence="1">Belongs to the NAD kinase family.</text>
</comment>
<keyword id="KW-0067">ATP-binding</keyword>
<keyword id="KW-0963">Cytoplasm</keyword>
<keyword id="KW-0418">Kinase</keyword>
<keyword id="KW-0520">NAD</keyword>
<keyword id="KW-0521">NADP</keyword>
<keyword id="KW-0547">Nucleotide-binding</keyword>
<keyword id="KW-1185">Reference proteome</keyword>
<keyword id="KW-0808">Transferase</keyword>